<evidence type="ECO:0000250" key="1"/>
<evidence type="ECO:0000250" key="2">
    <source>
        <dbReference type="UniProtKB" id="Q695P6"/>
    </source>
</evidence>
<evidence type="ECO:0000255" key="3"/>
<evidence type="ECO:0000255" key="4">
    <source>
        <dbReference type="PROSITE-ProRule" id="PRU00521"/>
    </source>
</evidence>
<evidence type="ECO:0000269" key="5">
    <source>
    </source>
</evidence>
<evidence type="ECO:0000305" key="6"/>
<proteinExistence type="evidence at protein level"/>
<protein>
    <recommendedName>
        <fullName>C5a anaphylatoxin chemotactic receptor 2</fullName>
    </recommendedName>
    <alternativeName>
        <fullName>Complement component 5a receptor 2</fullName>
    </alternativeName>
    <alternativeName>
        <fullName>G-protein coupled receptor 77</fullName>
    </alternativeName>
</protein>
<keyword id="KW-1003">Cell membrane</keyword>
<keyword id="KW-1015">Disulfide bond</keyword>
<keyword id="KW-0297">G-protein coupled receptor</keyword>
<keyword id="KW-0325">Glycoprotein</keyword>
<keyword id="KW-0472">Membrane</keyword>
<keyword id="KW-0597">Phosphoprotein</keyword>
<keyword id="KW-0675">Receptor</keyword>
<keyword id="KW-1185">Reference proteome</keyword>
<keyword id="KW-0807">Transducer</keyword>
<keyword id="KW-0812">Transmembrane</keyword>
<keyword id="KW-1133">Transmembrane helix</keyword>
<dbReference type="EMBL" id="AK053187">
    <property type="protein sequence ID" value="BAC35303.1"/>
    <property type="molecule type" value="mRNA"/>
</dbReference>
<dbReference type="EMBL" id="AK160050">
    <property type="protein sequence ID" value="BAE35590.1"/>
    <property type="status" value="ALT_INIT"/>
    <property type="molecule type" value="mRNA"/>
</dbReference>
<dbReference type="EMBL" id="BC137941">
    <property type="protein sequence ID" value="AAI37942.1"/>
    <property type="molecule type" value="mRNA"/>
</dbReference>
<dbReference type="EMBL" id="BC145834">
    <property type="protein sequence ID" value="AAI45835.1"/>
    <property type="molecule type" value="mRNA"/>
</dbReference>
<dbReference type="CCDS" id="CCDS52036.2"/>
<dbReference type="RefSeq" id="NP_001139477.2">
    <property type="nucleotide sequence ID" value="NM_001146005.3"/>
</dbReference>
<dbReference type="RefSeq" id="NP_001423076.1">
    <property type="nucleotide sequence ID" value="NM_001436147.1"/>
</dbReference>
<dbReference type="RefSeq" id="NP_001423077.1">
    <property type="nucleotide sequence ID" value="NM_001436148.1"/>
</dbReference>
<dbReference type="RefSeq" id="NP_001423078.1">
    <property type="nucleotide sequence ID" value="NM_001436149.1"/>
</dbReference>
<dbReference type="RefSeq" id="NP_001423079.1">
    <property type="nucleotide sequence ID" value="NM_001436150.1"/>
</dbReference>
<dbReference type="RefSeq" id="NP_795886.3">
    <property type="nucleotide sequence ID" value="NM_176912.6"/>
</dbReference>
<dbReference type="RefSeq" id="XP_006540112.2">
    <property type="nucleotide sequence ID" value="XM_006540049.2"/>
</dbReference>
<dbReference type="RefSeq" id="XP_006540115.1">
    <property type="nucleotide sequence ID" value="XM_006540052.4"/>
</dbReference>
<dbReference type="RefSeq" id="XP_006540116.1">
    <property type="nucleotide sequence ID" value="XM_006540053.4"/>
</dbReference>
<dbReference type="RefSeq" id="XP_006540117.1">
    <property type="nucleotide sequence ID" value="XM_006540054.3"/>
</dbReference>
<dbReference type="RefSeq" id="XP_006540118.1">
    <property type="nucleotide sequence ID" value="XM_006540055.3"/>
</dbReference>
<dbReference type="RefSeq" id="XP_006540119.1">
    <property type="nucleotide sequence ID" value="XM_006540056.3"/>
</dbReference>
<dbReference type="SMR" id="Q8BW93"/>
<dbReference type="FunCoup" id="Q8BW93">
    <property type="interactions" value="144"/>
</dbReference>
<dbReference type="IntAct" id="Q8BW93">
    <property type="interactions" value="1"/>
</dbReference>
<dbReference type="STRING" id="10090.ENSMUSP00000159074"/>
<dbReference type="GuidetoPHARMACOLOGY" id="33"/>
<dbReference type="GlyCosmos" id="Q8BW93">
    <property type="glycosylation" value="1 site, No reported glycans"/>
</dbReference>
<dbReference type="GlyGen" id="Q8BW93">
    <property type="glycosylation" value="1 site"/>
</dbReference>
<dbReference type="PhosphoSitePlus" id="Q8BW93"/>
<dbReference type="SwissPalm" id="Q8BW93"/>
<dbReference type="PaxDb" id="10090-ENSMUSP00000133056"/>
<dbReference type="Antibodypedia" id="2937">
    <property type="antibodies" value="419 antibodies from 37 providers"/>
</dbReference>
<dbReference type="DNASU" id="319430"/>
<dbReference type="Ensembl" id="ENSMUST00000171425.4">
    <property type="protein sequence ID" value="ENSMUSP00000133056.3"/>
    <property type="gene ID" value="ENSMUSG00000074361.12"/>
</dbReference>
<dbReference type="Ensembl" id="ENSMUST00000238927.2">
    <property type="protein sequence ID" value="ENSMUSP00000158951.2"/>
    <property type="gene ID" value="ENSMUSG00000074361.12"/>
</dbReference>
<dbReference type="GeneID" id="319430"/>
<dbReference type="KEGG" id="mmu:319430"/>
<dbReference type="AGR" id="MGI:2442013"/>
<dbReference type="CTD" id="27202"/>
<dbReference type="MGI" id="MGI:2442013">
    <property type="gene designation" value="C5ar2"/>
</dbReference>
<dbReference type="VEuPathDB" id="HostDB:ENSMUSG00000074361"/>
<dbReference type="eggNOG" id="ENOG502R35Z">
    <property type="taxonomic scope" value="Eukaryota"/>
</dbReference>
<dbReference type="GeneTree" id="ENSGT01130000278339"/>
<dbReference type="InParanoid" id="Q8BW93"/>
<dbReference type="OMA" id="AWMENTS"/>
<dbReference type="OrthoDB" id="9835842at2759"/>
<dbReference type="PhylomeDB" id="Q8BW93"/>
<dbReference type="Reactome" id="R-MMU-375276">
    <property type="pathway name" value="Peptide ligand-binding receptors"/>
</dbReference>
<dbReference type="Reactome" id="R-MMU-977606">
    <property type="pathway name" value="Regulation of Complement cascade"/>
</dbReference>
<dbReference type="BioGRID-ORCS" id="319430">
    <property type="hits" value="1 hit in 76 CRISPR screens"/>
</dbReference>
<dbReference type="PRO" id="PR:Q8BW93"/>
<dbReference type="Proteomes" id="UP000000589">
    <property type="component" value="Chromosome 7"/>
</dbReference>
<dbReference type="RNAct" id="Q8BW93">
    <property type="molecule type" value="protein"/>
</dbReference>
<dbReference type="Bgee" id="ENSMUSG00000074361">
    <property type="expression patterns" value="Expressed in granulocyte and 26 other cell types or tissues"/>
</dbReference>
<dbReference type="ExpressionAtlas" id="Q8BW93">
    <property type="expression patterns" value="baseline and differential"/>
</dbReference>
<dbReference type="GO" id="GO:0045177">
    <property type="term" value="C:apical part of cell"/>
    <property type="evidence" value="ECO:0000250"/>
    <property type="project" value="UniProtKB"/>
</dbReference>
<dbReference type="GO" id="GO:0009925">
    <property type="term" value="C:basal plasma membrane"/>
    <property type="evidence" value="ECO:0000250"/>
    <property type="project" value="UniProtKB"/>
</dbReference>
<dbReference type="GO" id="GO:0004875">
    <property type="term" value="F:complement receptor activity"/>
    <property type="evidence" value="ECO:0007669"/>
    <property type="project" value="InterPro"/>
</dbReference>
<dbReference type="GO" id="GO:0004930">
    <property type="term" value="F:G protein-coupled receptor activity"/>
    <property type="evidence" value="ECO:0007669"/>
    <property type="project" value="UniProtKB-KW"/>
</dbReference>
<dbReference type="GO" id="GO:0006935">
    <property type="term" value="P:chemotaxis"/>
    <property type="evidence" value="ECO:0007669"/>
    <property type="project" value="InterPro"/>
</dbReference>
<dbReference type="GO" id="GO:0032715">
    <property type="term" value="P:negative regulation of interleukin-6 production"/>
    <property type="evidence" value="ECO:0000250"/>
    <property type="project" value="UniProtKB"/>
</dbReference>
<dbReference type="GO" id="GO:0090024">
    <property type="term" value="P:negative regulation of neutrophil chemotaxis"/>
    <property type="evidence" value="ECO:0000250"/>
    <property type="project" value="UniProtKB"/>
</dbReference>
<dbReference type="GO" id="GO:0032720">
    <property type="term" value="P:negative regulation of tumor necrosis factor production"/>
    <property type="evidence" value="ECO:0000250"/>
    <property type="project" value="UniProtKB"/>
</dbReference>
<dbReference type="GO" id="GO:0032677">
    <property type="term" value="P:regulation of interleukin-8 production"/>
    <property type="evidence" value="ECO:0000250"/>
    <property type="project" value="UniProtKB"/>
</dbReference>
<dbReference type="CDD" id="cd15114">
    <property type="entry name" value="7tmA_C5aR"/>
    <property type="match status" value="1"/>
</dbReference>
<dbReference type="FunFam" id="1.20.1070.10:FF:000296">
    <property type="entry name" value="C5a anaphylatoxin chemotactic receptor 2"/>
    <property type="match status" value="1"/>
</dbReference>
<dbReference type="Gene3D" id="1.20.1070.10">
    <property type="entry name" value="Rhodopsin 7-helix transmembrane proteins"/>
    <property type="match status" value="1"/>
</dbReference>
<dbReference type="InterPro" id="IPR002234">
    <property type="entry name" value="Anphylx_rcpt_C3a/C5a1-2"/>
</dbReference>
<dbReference type="InterPro" id="IPR000826">
    <property type="entry name" value="Formyl_rcpt-rel"/>
</dbReference>
<dbReference type="InterPro" id="IPR000276">
    <property type="entry name" value="GPCR_Rhodpsn"/>
</dbReference>
<dbReference type="InterPro" id="IPR017452">
    <property type="entry name" value="GPCR_Rhodpsn_7TM"/>
</dbReference>
<dbReference type="PANTHER" id="PTHR24225:SF1">
    <property type="entry name" value="C5A ANAPHYLATOXIN CHEMOTACTIC RECEPTOR 2"/>
    <property type="match status" value="1"/>
</dbReference>
<dbReference type="PANTHER" id="PTHR24225">
    <property type="entry name" value="CHEMOTACTIC RECEPTOR"/>
    <property type="match status" value="1"/>
</dbReference>
<dbReference type="Pfam" id="PF00001">
    <property type="entry name" value="7tm_1"/>
    <property type="match status" value="1"/>
</dbReference>
<dbReference type="PRINTS" id="PR00426">
    <property type="entry name" value="C5ANPHYLTXNR"/>
</dbReference>
<dbReference type="PRINTS" id="PR00237">
    <property type="entry name" value="GPCRRHODOPSN"/>
</dbReference>
<dbReference type="SUPFAM" id="SSF81321">
    <property type="entry name" value="Family A G protein-coupled receptor-like"/>
    <property type="match status" value="1"/>
</dbReference>
<dbReference type="PROSITE" id="PS50262">
    <property type="entry name" value="G_PROTEIN_RECEP_F1_2"/>
    <property type="match status" value="1"/>
</dbReference>
<feature type="chain" id="PRO_0000303083" description="C5a anaphylatoxin chemotactic receptor 2">
    <location>
        <begin position="1"/>
        <end position="344"/>
    </location>
</feature>
<feature type="topological domain" description="Extracellular" evidence="3">
    <location>
        <begin position="1"/>
        <end position="44"/>
    </location>
</feature>
<feature type="transmembrane region" description="Helical; Name=1" evidence="3">
    <location>
        <begin position="45"/>
        <end position="67"/>
    </location>
</feature>
<feature type="topological domain" description="Cytoplasmic" evidence="3">
    <location>
        <begin position="68"/>
        <end position="78"/>
    </location>
</feature>
<feature type="transmembrane region" description="Helical; Name=2" evidence="3">
    <location>
        <begin position="79"/>
        <end position="101"/>
    </location>
</feature>
<feature type="topological domain" description="Extracellular" evidence="3">
    <location>
        <begin position="102"/>
        <end position="120"/>
    </location>
</feature>
<feature type="transmembrane region" description="Helical; Name=3" evidence="3">
    <location>
        <begin position="121"/>
        <end position="143"/>
    </location>
</feature>
<feature type="topological domain" description="Cytoplasmic" evidence="3">
    <location>
        <begin position="144"/>
        <end position="155"/>
    </location>
</feature>
<feature type="transmembrane region" description="Helical; Name=4" evidence="3">
    <location>
        <begin position="156"/>
        <end position="178"/>
    </location>
</feature>
<feature type="topological domain" description="Extracellular" evidence="3">
    <location>
        <begin position="179"/>
        <end position="208"/>
    </location>
</feature>
<feature type="transmembrane region" description="Helical; Name=5" evidence="3">
    <location>
        <begin position="209"/>
        <end position="231"/>
    </location>
</feature>
<feature type="topological domain" description="Cytoplasmic" evidence="3">
    <location>
        <begin position="232"/>
        <end position="243"/>
    </location>
</feature>
<feature type="transmembrane region" description="Helical; Name=6" evidence="3">
    <location>
        <begin position="244"/>
        <end position="266"/>
    </location>
</feature>
<feature type="topological domain" description="Extracellular" evidence="3">
    <location>
        <begin position="267"/>
        <end position="280"/>
    </location>
</feature>
<feature type="transmembrane region" description="Helical; Name=7" evidence="3">
    <location>
        <begin position="281"/>
        <end position="300"/>
    </location>
</feature>
<feature type="topological domain" description="Cytoplasmic" evidence="3">
    <location>
        <begin position="301"/>
        <end position="344"/>
    </location>
</feature>
<feature type="modified residue" description="Phosphoserine" evidence="2">
    <location>
        <position position="325"/>
    </location>
</feature>
<feature type="glycosylation site" description="N-linked (GlcNAc...) asparagine" evidence="3">
    <location>
        <position position="3"/>
    </location>
</feature>
<feature type="disulfide bond" evidence="4">
    <location>
        <begin position="113"/>
        <end position="192"/>
    </location>
</feature>
<feature type="sequence conflict" description="In Ref. 1; BAE35590." evidence="6" ref="1">
    <original>T</original>
    <variation>N</variation>
    <location>
        <position position="6"/>
    </location>
</feature>
<reference key="1">
    <citation type="journal article" date="2005" name="Science">
        <title>The transcriptional landscape of the mammalian genome.</title>
        <authorList>
            <person name="Carninci P."/>
            <person name="Kasukawa T."/>
            <person name="Katayama S."/>
            <person name="Gough J."/>
            <person name="Frith M.C."/>
            <person name="Maeda N."/>
            <person name="Oyama R."/>
            <person name="Ravasi T."/>
            <person name="Lenhard B."/>
            <person name="Wells C."/>
            <person name="Kodzius R."/>
            <person name="Shimokawa K."/>
            <person name="Bajic V.B."/>
            <person name="Brenner S.E."/>
            <person name="Batalov S."/>
            <person name="Forrest A.R."/>
            <person name="Zavolan M."/>
            <person name="Davis M.J."/>
            <person name="Wilming L.G."/>
            <person name="Aidinis V."/>
            <person name="Allen J.E."/>
            <person name="Ambesi-Impiombato A."/>
            <person name="Apweiler R."/>
            <person name="Aturaliya R.N."/>
            <person name="Bailey T.L."/>
            <person name="Bansal M."/>
            <person name="Baxter L."/>
            <person name="Beisel K.W."/>
            <person name="Bersano T."/>
            <person name="Bono H."/>
            <person name="Chalk A.M."/>
            <person name="Chiu K.P."/>
            <person name="Choudhary V."/>
            <person name="Christoffels A."/>
            <person name="Clutterbuck D.R."/>
            <person name="Crowe M.L."/>
            <person name="Dalla E."/>
            <person name="Dalrymple B.P."/>
            <person name="de Bono B."/>
            <person name="Della Gatta G."/>
            <person name="di Bernardo D."/>
            <person name="Down T."/>
            <person name="Engstrom P."/>
            <person name="Fagiolini M."/>
            <person name="Faulkner G."/>
            <person name="Fletcher C.F."/>
            <person name="Fukushima T."/>
            <person name="Furuno M."/>
            <person name="Futaki S."/>
            <person name="Gariboldi M."/>
            <person name="Georgii-Hemming P."/>
            <person name="Gingeras T.R."/>
            <person name="Gojobori T."/>
            <person name="Green R.E."/>
            <person name="Gustincich S."/>
            <person name="Harbers M."/>
            <person name="Hayashi Y."/>
            <person name="Hensch T.K."/>
            <person name="Hirokawa N."/>
            <person name="Hill D."/>
            <person name="Huminiecki L."/>
            <person name="Iacono M."/>
            <person name="Ikeo K."/>
            <person name="Iwama A."/>
            <person name="Ishikawa T."/>
            <person name="Jakt M."/>
            <person name="Kanapin A."/>
            <person name="Katoh M."/>
            <person name="Kawasawa Y."/>
            <person name="Kelso J."/>
            <person name="Kitamura H."/>
            <person name="Kitano H."/>
            <person name="Kollias G."/>
            <person name="Krishnan S.P."/>
            <person name="Kruger A."/>
            <person name="Kummerfeld S.K."/>
            <person name="Kurochkin I.V."/>
            <person name="Lareau L.F."/>
            <person name="Lazarevic D."/>
            <person name="Lipovich L."/>
            <person name="Liu J."/>
            <person name="Liuni S."/>
            <person name="McWilliam S."/>
            <person name="Madan Babu M."/>
            <person name="Madera M."/>
            <person name="Marchionni L."/>
            <person name="Matsuda H."/>
            <person name="Matsuzawa S."/>
            <person name="Miki H."/>
            <person name="Mignone F."/>
            <person name="Miyake S."/>
            <person name="Morris K."/>
            <person name="Mottagui-Tabar S."/>
            <person name="Mulder N."/>
            <person name="Nakano N."/>
            <person name="Nakauchi H."/>
            <person name="Ng P."/>
            <person name="Nilsson R."/>
            <person name="Nishiguchi S."/>
            <person name="Nishikawa S."/>
            <person name="Nori F."/>
            <person name="Ohara O."/>
            <person name="Okazaki Y."/>
            <person name="Orlando V."/>
            <person name="Pang K.C."/>
            <person name="Pavan W.J."/>
            <person name="Pavesi G."/>
            <person name="Pesole G."/>
            <person name="Petrovsky N."/>
            <person name="Piazza S."/>
            <person name="Reed J."/>
            <person name="Reid J.F."/>
            <person name="Ring B.Z."/>
            <person name="Ringwald M."/>
            <person name="Rost B."/>
            <person name="Ruan Y."/>
            <person name="Salzberg S.L."/>
            <person name="Sandelin A."/>
            <person name="Schneider C."/>
            <person name="Schoenbach C."/>
            <person name="Sekiguchi K."/>
            <person name="Semple C.A."/>
            <person name="Seno S."/>
            <person name="Sessa L."/>
            <person name="Sheng Y."/>
            <person name="Shibata Y."/>
            <person name="Shimada H."/>
            <person name="Shimada K."/>
            <person name="Silva D."/>
            <person name="Sinclair B."/>
            <person name="Sperling S."/>
            <person name="Stupka E."/>
            <person name="Sugiura K."/>
            <person name="Sultana R."/>
            <person name="Takenaka Y."/>
            <person name="Taki K."/>
            <person name="Tammoja K."/>
            <person name="Tan S.L."/>
            <person name="Tang S."/>
            <person name="Taylor M.S."/>
            <person name="Tegner J."/>
            <person name="Teichmann S.A."/>
            <person name="Ueda H.R."/>
            <person name="van Nimwegen E."/>
            <person name="Verardo R."/>
            <person name="Wei C.L."/>
            <person name="Yagi K."/>
            <person name="Yamanishi H."/>
            <person name="Zabarovsky E."/>
            <person name="Zhu S."/>
            <person name="Zimmer A."/>
            <person name="Hide W."/>
            <person name="Bult C."/>
            <person name="Grimmond S.M."/>
            <person name="Teasdale R.D."/>
            <person name="Liu E.T."/>
            <person name="Brusic V."/>
            <person name="Quackenbush J."/>
            <person name="Wahlestedt C."/>
            <person name="Mattick J.S."/>
            <person name="Hume D.A."/>
            <person name="Kai C."/>
            <person name="Sasaki D."/>
            <person name="Tomaru Y."/>
            <person name="Fukuda S."/>
            <person name="Kanamori-Katayama M."/>
            <person name="Suzuki M."/>
            <person name="Aoki J."/>
            <person name="Arakawa T."/>
            <person name="Iida J."/>
            <person name="Imamura K."/>
            <person name="Itoh M."/>
            <person name="Kato T."/>
            <person name="Kawaji H."/>
            <person name="Kawagashira N."/>
            <person name="Kawashima T."/>
            <person name="Kojima M."/>
            <person name="Kondo S."/>
            <person name="Konno H."/>
            <person name="Nakano K."/>
            <person name="Ninomiya N."/>
            <person name="Nishio T."/>
            <person name="Okada M."/>
            <person name="Plessy C."/>
            <person name="Shibata K."/>
            <person name="Shiraki T."/>
            <person name="Suzuki S."/>
            <person name="Tagami M."/>
            <person name="Waki K."/>
            <person name="Watahiki A."/>
            <person name="Okamura-Oho Y."/>
            <person name="Suzuki H."/>
            <person name="Kawai J."/>
            <person name="Hayashizaki Y."/>
        </authorList>
    </citation>
    <scope>NUCLEOTIDE SEQUENCE [LARGE SCALE MRNA]</scope>
    <source>
        <strain>C57BL/6J</strain>
        <tissue>Lung</tissue>
    </source>
</reference>
<reference key="2">
    <citation type="journal article" date="2004" name="Genome Res.">
        <title>The status, quality, and expansion of the NIH full-length cDNA project: the Mammalian Gene Collection (MGC).</title>
        <authorList>
            <consortium name="The MGC Project Team"/>
        </authorList>
    </citation>
    <scope>NUCLEOTIDE SEQUENCE [LARGE SCALE MRNA]</scope>
    <source>
        <tissue>Brain</tissue>
    </source>
</reference>
<reference key="3">
    <citation type="journal article" date="2005" name="J. Biol. Chem.">
        <title>C5L2 is a functional receptor for acylation-stimulating protein.</title>
        <authorList>
            <person name="Kalant D."/>
            <person name="MacLaren R."/>
            <person name="Cui W."/>
            <person name="Samanta R."/>
            <person name="Monk P.N."/>
            <person name="Laporte S.A."/>
            <person name="Cianflone K."/>
        </authorList>
    </citation>
    <scope>TISSUE SPECIFICITY</scope>
</reference>
<reference key="4">
    <citation type="journal article" date="2007" name="Proc. Natl. Acad. Sci. U.S.A.">
        <title>Large-scale phosphorylation analysis of mouse liver.</title>
        <authorList>
            <person name="Villen J."/>
            <person name="Beausoleil S.A."/>
            <person name="Gerber S.A."/>
            <person name="Gygi S.P."/>
        </authorList>
    </citation>
    <scope>IDENTIFICATION BY MASS SPECTROMETRY [LARGE SCALE ANALYSIS]</scope>
    <source>
        <tissue>Liver</tissue>
    </source>
</reference>
<sequence length="344" mass="38199">MMNHTTSEYYDYEYDHEHYSDLPDVPVDCPAGTCFTSDVYLIVLLVLYAAVFLVGVPGNTLVAWVTWKESRHRLGASWFLHLTMADLLCCVSLPFLAVPIAQKGHWPYGAAGCWLLSSITILSMYASVLLLTGLSGDLFLLAFRPSWKGADHRTFGVRVVQASSWMLGLLLTVPSAVYRRLLQEHYPPRLVCGIDYGGSVSAEVAITTVRFLFGFLGPLVFMAGCHGILQRQMARRHWPLGTAVVVGFFICWTPYHVLRVIIAAAPPHSLLLARVLEAEPLFNGLALAHSALNPIMFLYFGRKQLCKSLQAACHWALRDPQDEESAVTKVSISTSHEMVSEMPV</sequence>
<gene>
    <name type="primary">C5ar2</name>
    <name type="synonym">C5l2</name>
    <name type="synonym">Gpr77</name>
</gene>
<accession>Q8BW93</accession>
<accession>B2RQI1</accession>
<accession>Q3TVM8</accession>
<name>C5AR2_MOUSE</name>
<comment type="function">
    <text evidence="1">Receptor for the chemotactic and inflammatory C3a, C4a and C5a anaphylatoxin peptides and also for their dearginated forms ASP/C3adesArg, C4adesArg and C5adesArg respectively. Couples weakly to G(i)-mediated signaling pathways (By similarity).</text>
</comment>
<comment type="subunit">
    <text evidence="1">Interacts with C3 (the anaphylatoxin peptide C3a and the adipogenic hormone ASP); the interaction occurs with higher affinity for ASP, enhancing the phosphorylation and activation of GPR77, recruitment of ARRB2 to the cell surface and endocytosis of GRP77.</text>
</comment>
<comment type="subcellular location">
    <subcellularLocation>
        <location>Cell membrane</location>
        <topology>Multi-pass membrane protein</topology>
    </subcellularLocation>
</comment>
<comment type="tissue specificity">
    <text evidence="5">Highly expressed in liver and spleen. Lower levels in intestine, brain and kidney. Also expressed in adipose tissues with highest levels in gonadal and ingual fat depots. Lower levels in brown tissue.</text>
</comment>
<comment type="similarity">
    <text evidence="4">Belongs to the G-protein coupled receptor 1 family.</text>
</comment>
<comment type="sequence caution" evidence="6">
    <conflict type="erroneous initiation">
        <sequence resource="EMBL-CDS" id="BAE35590"/>
    </conflict>
</comment>
<organism>
    <name type="scientific">Mus musculus</name>
    <name type="common">Mouse</name>
    <dbReference type="NCBI Taxonomy" id="10090"/>
    <lineage>
        <taxon>Eukaryota</taxon>
        <taxon>Metazoa</taxon>
        <taxon>Chordata</taxon>
        <taxon>Craniata</taxon>
        <taxon>Vertebrata</taxon>
        <taxon>Euteleostomi</taxon>
        <taxon>Mammalia</taxon>
        <taxon>Eutheria</taxon>
        <taxon>Euarchontoglires</taxon>
        <taxon>Glires</taxon>
        <taxon>Rodentia</taxon>
        <taxon>Myomorpha</taxon>
        <taxon>Muroidea</taxon>
        <taxon>Muridae</taxon>
        <taxon>Murinae</taxon>
        <taxon>Mus</taxon>
        <taxon>Mus</taxon>
    </lineage>
</organism>